<proteinExistence type="inferred from homology"/>
<accession>Q2NW55</accession>
<protein>
    <recommendedName>
        <fullName evidence="1">Small ribosomal subunit protein bS6</fullName>
    </recommendedName>
    <alternativeName>
        <fullName evidence="3">30S ribosomal protein S6</fullName>
    </alternativeName>
</protein>
<reference key="1">
    <citation type="journal article" date="2006" name="Genome Res.">
        <title>Massive genome erosion and functional adaptations provide insights into the symbiotic lifestyle of Sodalis glossinidius in the tsetse host.</title>
        <authorList>
            <person name="Toh H."/>
            <person name="Weiss B.L."/>
            <person name="Perkin S.A.H."/>
            <person name="Yamashita A."/>
            <person name="Oshima K."/>
            <person name="Hattori M."/>
            <person name="Aksoy S."/>
        </authorList>
    </citation>
    <scope>NUCLEOTIDE SEQUENCE [LARGE SCALE GENOMIC DNA]</scope>
    <source>
        <strain>morsitans</strain>
    </source>
</reference>
<comment type="function">
    <text evidence="1">Binds together with bS18 to 16S ribosomal RNA.</text>
</comment>
<comment type="similarity">
    <text evidence="1">Belongs to the bacterial ribosomal protein bS6 family.</text>
</comment>
<keyword id="KW-0687">Ribonucleoprotein</keyword>
<keyword id="KW-0689">Ribosomal protein</keyword>
<keyword id="KW-0694">RNA-binding</keyword>
<keyword id="KW-0699">rRNA-binding</keyword>
<dbReference type="EMBL" id="AP008232">
    <property type="protein sequence ID" value="BAE73620.1"/>
    <property type="molecule type" value="Genomic_DNA"/>
</dbReference>
<dbReference type="RefSeq" id="WP_011410208.1">
    <property type="nucleotide sequence ID" value="NC_007712.1"/>
</dbReference>
<dbReference type="SMR" id="Q2NW55"/>
<dbReference type="STRING" id="343509.SG0345"/>
<dbReference type="KEGG" id="sgl:SG0345"/>
<dbReference type="eggNOG" id="COG0360">
    <property type="taxonomic scope" value="Bacteria"/>
</dbReference>
<dbReference type="HOGENOM" id="CLU_113441_6_1_6"/>
<dbReference type="OrthoDB" id="9812702at2"/>
<dbReference type="Proteomes" id="UP000001932">
    <property type="component" value="Chromosome"/>
</dbReference>
<dbReference type="GO" id="GO:0022627">
    <property type="term" value="C:cytosolic small ribosomal subunit"/>
    <property type="evidence" value="ECO:0007669"/>
    <property type="project" value="TreeGrafter"/>
</dbReference>
<dbReference type="GO" id="GO:0070181">
    <property type="term" value="F:small ribosomal subunit rRNA binding"/>
    <property type="evidence" value="ECO:0007669"/>
    <property type="project" value="TreeGrafter"/>
</dbReference>
<dbReference type="GO" id="GO:0003735">
    <property type="term" value="F:structural constituent of ribosome"/>
    <property type="evidence" value="ECO:0007669"/>
    <property type="project" value="InterPro"/>
</dbReference>
<dbReference type="GO" id="GO:0006412">
    <property type="term" value="P:translation"/>
    <property type="evidence" value="ECO:0007669"/>
    <property type="project" value="UniProtKB-UniRule"/>
</dbReference>
<dbReference type="CDD" id="cd00473">
    <property type="entry name" value="bS6"/>
    <property type="match status" value="1"/>
</dbReference>
<dbReference type="FunFam" id="3.30.70.60:FF:000003">
    <property type="entry name" value="30S ribosomal protein S6"/>
    <property type="match status" value="1"/>
</dbReference>
<dbReference type="Gene3D" id="3.30.70.60">
    <property type="match status" value="1"/>
</dbReference>
<dbReference type="HAMAP" id="MF_00360">
    <property type="entry name" value="Ribosomal_bS6"/>
    <property type="match status" value="1"/>
</dbReference>
<dbReference type="InterPro" id="IPR000529">
    <property type="entry name" value="Ribosomal_bS6"/>
</dbReference>
<dbReference type="InterPro" id="IPR020815">
    <property type="entry name" value="Ribosomal_bS6_CS"/>
</dbReference>
<dbReference type="InterPro" id="IPR035980">
    <property type="entry name" value="Ribosomal_bS6_sf"/>
</dbReference>
<dbReference type="InterPro" id="IPR020814">
    <property type="entry name" value="Ribosomal_S6_plastid/chlpt"/>
</dbReference>
<dbReference type="InterPro" id="IPR014717">
    <property type="entry name" value="Transl_elong_EF1B/ribsomal_bS6"/>
</dbReference>
<dbReference type="NCBIfam" id="TIGR00166">
    <property type="entry name" value="S6"/>
    <property type="match status" value="1"/>
</dbReference>
<dbReference type="PANTHER" id="PTHR21011">
    <property type="entry name" value="MITOCHONDRIAL 28S RIBOSOMAL PROTEIN S6"/>
    <property type="match status" value="1"/>
</dbReference>
<dbReference type="PANTHER" id="PTHR21011:SF1">
    <property type="entry name" value="SMALL RIBOSOMAL SUBUNIT PROTEIN BS6M"/>
    <property type="match status" value="1"/>
</dbReference>
<dbReference type="Pfam" id="PF01250">
    <property type="entry name" value="Ribosomal_S6"/>
    <property type="match status" value="1"/>
</dbReference>
<dbReference type="SUPFAM" id="SSF54995">
    <property type="entry name" value="Ribosomal protein S6"/>
    <property type="match status" value="1"/>
</dbReference>
<dbReference type="PROSITE" id="PS01048">
    <property type="entry name" value="RIBOSOMAL_S6"/>
    <property type="match status" value="1"/>
</dbReference>
<name>RS6_SODGM</name>
<organism>
    <name type="scientific">Sodalis glossinidius (strain morsitans)</name>
    <dbReference type="NCBI Taxonomy" id="343509"/>
    <lineage>
        <taxon>Bacteria</taxon>
        <taxon>Pseudomonadati</taxon>
        <taxon>Pseudomonadota</taxon>
        <taxon>Gammaproteobacteria</taxon>
        <taxon>Enterobacterales</taxon>
        <taxon>Bruguierivoracaceae</taxon>
        <taxon>Sodalis</taxon>
    </lineage>
</organism>
<sequence>MRHYEIIFMVHPDQSEQVAGMIERYSALITGAEGQIHRLEDWGRRQLAYPINKLHKAHYVLLNVEAPQEVIDELETVFRFNDAVIRSMIMRVKHAVTEASPMVKAKDERRERREDFATETNEDSDAGDSEE</sequence>
<evidence type="ECO:0000255" key="1">
    <source>
        <dbReference type="HAMAP-Rule" id="MF_00360"/>
    </source>
</evidence>
<evidence type="ECO:0000256" key="2">
    <source>
        <dbReference type="SAM" id="MobiDB-lite"/>
    </source>
</evidence>
<evidence type="ECO:0000305" key="3"/>
<feature type="chain" id="PRO_1000005357" description="Small ribosomal subunit protein bS6">
    <location>
        <begin position="1"/>
        <end position="131"/>
    </location>
</feature>
<feature type="region of interest" description="Disordered" evidence="2">
    <location>
        <begin position="99"/>
        <end position="131"/>
    </location>
</feature>
<feature type="compositionally biased region" description="Basic and acidic residues" evidence="2">
    <location>
        <begin position="104"/>
        <end position="116"/>
    </location>
</feature>
<feature type="compositionally biased region" description="Acidic residues" evidence="2">
    <location>
        <begin position="120"/>
        <end position="131"/>
    </location>
</feature>
<gene>
    <name evidence="1" type="primary">rpsF</name>
    <name type="ordered locus">SG0345</name>
</gene>